<dbReference type="EMBL" id="CY009304">
    <property type="protein sequence ID" value="ABD61556.1"/>
    <property type="molecule type" value="Genomic_RNA"/>
</dbReference>
<dbReference type="BMRB" id="Q288Z0"/>
<dbReference type="SMR" id="Q288Z0"/>
<dbReference type="Proteomes" id="UP000009193">
    <property type="component" value="Genome"/>
</dbReference>
<dbReference type="GO" id="GO:0030430">
    <property type="term" value="C:host cell cytoplasm"/>
    <property type="evidence" value="ECO:0007669"/>
    <property type="project" value="UniProtKB-SubCell"/>
</dbReference>
<dbReference type="GO" id="GO:0042025">
    <property type="term" value="C:host cell nucleus"/>
    <property type="evidence" value="ECO:0007669"/>
    <property type="project" value="UniProtKB-SubCell"/>
</dbReference>
<dbReference type="GO" id="GO:0030291">
    <property type="term" value="F:protein serine/threonine kinase inhibitor activity"/>
    <property type="evidence" value="ECO:0007669"/>
    <property type="project" value="UniProtKB-KW"/>
</dbReference>
<dbReference type="GO" id="GO:0003723">
    <property type="term" value="F:RNA binding"/>
    <property type="evidence" value="ECO:0007669"/>
    <property type="project" value="UniProtKB-KW"/>
</dbReference>
<dbReference type="GO" id="GO:0039540">
    <property type="term" value="P:symbiont-mediated suppression of host cytoplasmic pattern recognition receptor signaling pathway via inhibition of RIG-I activity"/>
    <property type="evidence" value="ECO:0007669"/>
    <property type="project" value="UniProtKB-KW"/>
</dbReference>
<dbReference type="GO" id="GO:0039657">
    <property type="term" value="P:symbiont-mediated suppression of host gene expression"/>
    <property type="evidence" value="ECO:0007669"/>
    <property type="project" value="UniProtKB-KW"/>
</dbReference>
<dbReference type="GO" id="GO:0039524">
    <property type="term" value="P:symbiont-mediated suppression of host mRNA processing"/>
    <property type="evidence" value="ECO:0007669"/>
    <property type="project" value="UniProtKB-KW"/>
</dbReference>
<dbReference type="GO" id="GO:0039580">
    <property type="term" value="P:symbiont-mediated suppression of host PKR/eIFalpha signaling"/>
    <property type="evidence" value="ECO:0007669"/>
    <property type="project" value="UniProtKB-KW"/>
</dbReference>
<dbReference type="GO" id="GO:0039502">
    <property type="term" value="P:symbiont-mediated suppression of host type I interferon-mediated signaling pathway"/>
    <property type="evidence" value="ECO:0007669"/>
    <property type="project" value="UniProtKB-KW"/>
</dbReference>
<dbReference type="FunFam" id="1.10.287.10:FF:000001">
    <property type="entry name" value="Non-structural protein 1"/>
    <property type="match status" value="1"/>
</dbReference>
<dbReference type="FunFam" id="3.30.420.330:FF:000001">
    <property type="entry name" value="Non-structural protein 1"/>
    <property type="match status" value="1"/>
</dbReference>
<dbReference type="Gene3D" id="3.30.420.330">
    <property type="entry name" value="Influenza virus non-structural protein, effector domain"/>
    <property type="match status" value="1"/>
</dbReference>
<dbReference type="Gene3D" id="1.10.287.10">
    <property type="entry name" value="S15/NS1, RNA-binding"/>
    <property type="match status" value="1"/>
</dbReference>
<dbReference type="HAMAP" id="MF_04066">
    <property type="entry name" value="INFV_NS1"/>
    <property type="match status" value="1"/>
</dbReference>
<dbReference type="InterPro" id="IPR004208">
    <property type="entry name" value="NS1"/>
</dbReference>
<dbReference type="InterPro" id="IPR000256">
    <property type="entry name" value="NS1A"/>
</dbReference>
<dbReference type="InterPro" id="IPR038064">
    <property type="entry name" value="NS1A_effect_dom-like_sf"/>
</dbReference>
<dbReference type="InterPro" id="IPR009068">
    <property type="entry name" value="uS15_NS1_RNA-bd_sf"/>
</dbReference>
<dbReference type="Pfam" id="PF00600">
    <property type="entry name" value="Flu_NS1"/>
    <property type="match status" value="1"/>
</dbReference>
<dbReference type="SUPFAM" id="SSF143021">
    <property type="entry name" value="Ns1 effector domain-like"/>
    <property type="match status" value="1"/>
</dbReference>
<dbReference type="SUPFAM" id="SSF47060">
    <property type="entry name" value="S15/NS1 RNA-binding domain"/>
    <property type="match status" value="1"/>
</dbReference>
<protein>
    <recommendedName>
        <fullName evidence="1">Non-structural protein 1</fullName>
        <shortName evidence="1">NS1</shortName>
    </recommendedName>
    <alternativeName>
        <fullName evidence="1">NS1A</fullName>
    </alternativeName>
</protein>
<comment type="function">
    <text evidence="1">Inhibits post-transcriptional processing of cellular pre-mRNA, by binding and inhibiting two cellular proteins that are required for the 3'-end processing of cellular pre-mRNAs: the 30 kDa cleavage and polyadenylation specificity factor/CPSF4 and the poly(A)-binding protein 2/PABPN1. In turn, unprocessed 3' end pre-mRNAs accumulate in the host nucleus and are no longer exported to the cytoplasm. Cellular protein synthesis is thereby shut off very early after virus infection. Viral protein synthesis is not affected by the inhibition of the cellular 3' end processing machinery because the poly(A) tails of viral mRNAs are produced by the viral polymerase through a stuttering mechanism. Prevents the establishment of the cellular antiviral state by inhibiting TRIM25-mediated RIGI ubiquitination, which normally triggers the antiviral transduction signal that leads to the activation of type I IFN genes by transcription factors IRF3 and IRF7. Also binds poly(A) and U6 snRNA. Inhibits the integrated stress response (ISR) in the infected cell by blocking dsRNA binding by EIF2AK2/PKR and further phosphorylation of EIF2S1/EIF-2ALPHA. Stress granule formation is thus inhibited, which allows protein synthesis and viral replication.</text>
</comment>
<comment type="subunit">
    <text evidence="1">Homodimer. Interacts with host TRIM25 (via coiled coil); this interaction specifically inhibits TRIM25 multimerization and TRIM25-mediated RIGI CARD ubiquitination. Interacts with human EIF2AK2/PKR, CPSF4, IVNS1ABP and PABPN1.</text>
</comment>
<comment type="subcellular location">
    <subcellularLocation>
        <location evidence="1">Host nucleus</location>
    </subcellularLocation>
    <subcellularLocation>
        <location evidence="1">Host cytoplasm</location>
    </subcellularLocation>
    <text evidence="1">In uninfected, transfected cells, NS1 is localized in the nucleus. Only in virus infected cells, the nuclear export signal is unveiled, presumably by a viral protein, and a fraction of NS1 is exported in the cytoplasm.</text>
</comment>
<comment type="alternative products">
    <event type="alternative splicing"/>
    <isoform>
        <id>Q288Z0-1</id>
        <name>NS1</name>
        <sequence type="displayed"/>
    </isoform>
    <isoform>
        <id>Q288Z1-1</id>
        <name>NEP</name>
        <name>NS2</name>
        <sequence type="external"/>
    </isoform>
</comment>
<comment type="domain">
    <text evidence="1">The dsRNA-binding region is required for suppression of RNA silencing.</text>
</comment>
<comment type="PTM">
    <text evidence="1">Upon interferon induction, ISGylated via host HERC5; this results in the impairment of NS1 interaction with RNA targets due to its inability to form homodimers and to interact with host EIF2AK2/PKR.</text>
</comment>
<comment type="similarity">
    <text evidence="1">Belongs to the influenza A viruses NS1 family.</text>
</comment>
<reference key="1">
    <citation type="submission" date="2006-03" db="EMBL/GenBank/DDBJ databases">
        <title>The NIAID influenza genome sequencing project.</title>
        <authorList>
            <person name="Ghedin E."/>
            <person name="Spiro D."/>
            <person name="Miller N."/>
            <person name="Zaborsky J."/>
            <person name="Feldblyum T."/>
            <person name="Subbu V."/>
            <person name="Shumway M."/>
            <person name="Sparenborg J."/>
            <person name="Groveman L."/>
            <person name="Halpin R."/>
            <person name="Sitz J."/>
            <person name="Koo H."/>
            <person name="Salzberg S.L."/>
            <person name="Webster R.G."/>
            <person name="Hoffmann E."/>
            <person name="Krauss S."/>
            <person name="Naeve C."/>
            <person name="Bao Y."/>
            <person name="Bolotov P."/>
            <person name="Dernovoy D."/>
            <person name="Kiryutin B."/>
            <person name="Lipman D.J."/>
            <person name="Tatusova T."/>
        </authorList>
    </citation>
    <scope>NUCLEOTIDE SEQUENCE [GENOMIC RNA]</scope>
</reference>
<proteinExistence type="inferred from homology"/>
<organism>
    <name type="scientific">Influenza A virus (strain A/Swine/Colorado/1/1977 H3N2)</name>
    <dbReference type="NCBI Taxonomy" id="385645"/>
    <lineage>
        <taxon>Viruses</taxon>
        <taxon>Riboviria</taxon>
        <taxon>Orthornavirae</taxon>
        <taxon>Negarnaviricota</taxon>
        <taxon>Polyploviricotina</taxon>
        <taxon>Insthoviricetes</taxon>
        <taxon>Articulavirales</taxon>
        <taxon>Orthomyxoviridae</taxon>
        <taxon>Alphainfluenzavirus</taxon>
        <taxon>Alphainfluenzavirus influenzae</taxon>
        <taxon>Influenza A virus</taxon>
    </lineage>
</organism>
<evidence type="ECO:0000255" key="1">
    <source>
        <dbReference type="HAMAP-Rule" id="MF_04066"/>
    </source>
</evidence>
<evidence type="ECO:0000256" key="2">
    <source>
        <dbReference type="SAM" id="MobiDB-lite"/>
    </source>
</evidence>
<sequence length="237" mass="26752">MDSNTVSSFQVDCFLWHVRKQIVDQELGDAPFLDRLRRDQKSLRGRGSTLGLDIEAATHVGKQIVEKILKEESDEALTMTMASTPASRYITDMTTEELSRDWFMLMPKQKVEGPLCIRIDQAIMNKNIMLKANFSVIFDRLETLILLRAFTEEGAIVGEISPLPSFPGHTIEDVKNAIGVLIGGLEWNDNTVRVSKTLQRFAWGSSNENGGPPLTPKQKRKMARTTRSKVRRDKMAD</sequence>
<keyword id="KW-0025">Alternative splicing</keyword>
<keyword id="KW-1262">Eukaryotic host gene expression shutoff by virus</keyword>
<keyword id="KW-1035">Host cytoplasm</keyword>
<keyword id="KW-1190">Host gene expression shutoff by virus</keyword>
<keyword id="KW-1192">Host mRNA suppression by virus</keyword>
<keyword id="KW-1048">Host nucleus</keyword>
<keyword id="KW-0945">Host-virus interaction</keyword>
<keyword id="KW-1090">Inhibition of host innate immune response by virus</keyword>
<keyword id="KW-1114">Inhibition of host interferon signaling pathway by virus</keyword>
<keyword id="KW-1102">Inhibition of host PKR by virus</keyword>
<keyword id="KW-1103">Inhibition of host pre-mRNA processing by virus</keyword>
<keyword id="KW-1088">Inhibition of host RIG-I by virus</keyword>
<keyword id="KW-1113">Inhibition of host RLR pathway by virus</keyword>
<keyword id="KW-0922">Interferon antiviral system evasion</keyword>
<keyword id="KW-0694">RNA-binding</keyword>
<keyword id="KW-0832">Ubl conjugation</keyword>
<keyword id="KW-0899">Viral immunoevasion</keyword>
<feature type="chain" id="PRO_0000324257" description="Non-structural protein 1">
    <location>
        <begin position="1"/>
        <end position="237"/>
    </location>
</feature>
<feature type="region of interest" description="RNA-binding and homodimerization" evidence="1">
    <location>
        <begin position="1"/>
        <end position="73"/>
    </location>
</feature>
<feature type="region of interest" description="CPSF4-binding" evidence="1">
    <location>
        <begin position="180"/>
        <end position="215"/>
    </location>
</feature>
<feature type="region of interest" description="Disordered" evidence="2">
    <location>
        <begin position="205"/>
        <end position="237"/>
    </location>
</feature>
<feature type="region of interest" description="PABPN1-binding" evidence="1">
    <location>
        <begin position="223"/>
        <end position="230"/>
    </location>
</feature>
<feature type="short sequence motif" description="Nuclear localization signal" evidence="1">
    <location>
        <begin position="34"/>
        <end position="38"/>
    </location>
</feature>
<feature type="short sequence motif" description="Nuclear export signal" evidence="1">
    <location>
        <begin position="137"/>
        <end position="146"/>
    </location>
</feature>
<feature type="compositionally biased region" description="Basic residues" evidence="2">
    <location>
        <begin position="217"/>
        <end position="237"/>
    </location>
</feature>
<accession>Q288Z0</accession>
<gene>
    <name evidence="1" type="primary">NS</name>
</gene>
<name>NS1_I77A4</name>
<organismHost>
    <name type="scientific">Aves</name>
    <dbReference type="NCBI Taxonomy" id="8782"/>
</organismHost>
<organismHost>
    <name type="scientific">Cetacea</name>
    <name type="common">whales</name>
    <dbReference type="NCBI Taxonomy" id="9721"/>
</organismHost>
<organismHost>
    <name type="scientific">Homo sapiens</name>
    <name type="common">Human</name>
    <dbReference type="NCBI Taxonomy" id="9606"/>
</organismHost>
<organismHost>
    <name type="scientific">Phocidae</name>
    <name type="common">true seals</name>
    <dbReference type="NCBI Taxonomy" id="9709"/>
</organismHost>
<organismHost>
    <name type="scientific">Sus scrofa</name>
    <name type="common">Pig</name>
    <dbReference type="NCBI Taxonomy" id="9823"/>
</organismHost>